<keyword id="KW-0963">Cytoplasm</keyword>
<keyword id="KW-0413">Isomerase</keyword>
<keyword id="KW-0414">Isoprene biosynthesis</keyword>
<keyword id="KW-0444">Lipid biosynthesis</keyword>
<keyword id="KW-0443">Lipid metabolism</keyword>
<keyword id="KW-0460">Magnesium</keyword>
<keyword id="KW-0479">Metal-binding</keyword>
<keyword id="KW-0539">Nucleus</keyword>
<keyword id="KW-1185">Reference proteome</keyword>
<keyword id="KW-0752">Steroid biosynthesis</keyword>
<keyword id="KW-0753">Steroid metabolism</keyword>
<keyword id="KW-0756">Sterol biosynthesis</keyword>
<keyword id="KW-1207">Sterol metabolism</keyword>
<comment type="function">
    <text evidence="6 8">Isopentenyl-diphosphate delta-isomerase; part of the second module of ergosterol biosynthesis pathway that includes the middle steps of the pathway (PubMed:7744766). Idi1 catalyzes the 1,3-allylic rearrangement of isopentenyl (IPP) to its highly electrophilic allylic isomer, dimethylallyl diphosphate (DMAPP) (PubMed:7744766). The second module is carried out in the vacuole and involves the formation of farnesyl diphosphate, which is also an important intermediate in the biosynthesis of ubiquinone, dolichol, heme and prenylated proteins. Activity by the mevalonate kinase erg12 first converts mevalonate into 5-phosphomevalonate. 5-phosphomevalonate is then further converted to 5-diphosphomevalonate by the phosphomevalonate kinase erg8. The diphosphomevalonate decarboxylase mvd1 then produces isopentenyl diphosphate. The isopentenyl-diphosphate delta-isomerase idi1 then catalyzes the 1,3-allylic rearrangement of the homoallylic substrate isopentenyl (IPP) to its highly electrophilic allylic isomer, dimethylallyl diphosphate (DMAPP). Finally the farnesyl diphosphate synthase fps1 catalyzes the sequential condensation of isopentenyl pyrophosphate with dimethylallyl pyrophosphate, and then with the resultant geranylpyrophosphate to the ultimate product farnesyl pyrophosphate (Probable).</text>
</comment>
<comment type="catalytic activity">
    <reaction evidence="9">
        <text>isopentenyl diphosphate = dimethylallyl diphosphate</text>
        <dbReference type="Rhea" id="RHEA:23284"/>
        <dbReference type="ChEBI" id="CHEBI:57623"/>
        <dbReference type="ChEBI" id="CHEBI:128769"/>
        <dbReference type="EC" id="5.3.3.2"/>
    </reaction>
    <physiologicalReaction direction="left-to-right" evidence="9">
        <dbReference type="Rhea" id="RHEA:23285"/>
    </physiologicalReaction>
</comment>
<comment type="cofactor">
    <cofactor evidence="3">
        <name>Mg(2+)</name>
        <dbReference type="ChEBI" id="CHEBI:18420"/>
    </cofactor>
    <text evidence="3">Binds 1 Mg(2+) ion per subunit.</text>
</comment>
<comment type="pathway">
    <text evidence="9">Isoprenoid biosynthesis; dimethylallyl diphosphate biosynthesis; dimethylallyl diphosphate from isopentenyl diphosphate: step 1/1.</text>
</comment>
<comment type="subcellular location">
    <subcellularLocation>
        <location evidence="5">Cytoplasm</location>
    </subcellularLocation>
    <subcellularLocation>
        <location evidence="5">Nucleus</location>
    </subcellularLocation>
</comment>
<comment type="similarity">
    <text evidence="8">Belongs to the IPP isomerase type 1 family.</text>
</comment>
<proteinExistence type="evidence at transcript level"/>
<evidence type="ECO:0000250" key="1">
    <source>
        <dbReference type="UniProtKB" id="P15496"/>
    </source>
</evidence>
<evidence type="ECO:0000250" key="2">
    <source>
        <dbReference type="UniProtKB" id="Q13907"/>
    </source>
</evidence>
<evidence type="ECO:0000250" key="3">
    <source>
        <dbReference type="UniProtKB" id="Q46822"/>
    </source>
</evidence>
<evidence type="ECO:0000255" key="4">
    <source>
        <dbReference type="PROSITE-ProRule" id="PRU00794"/>
    </source>
</evidence>
<evidence type="ECO:0000269" key="5">
    <source>
    </source>
</evidence>
<evidence type="ECO:0000269" key="6">
    <source>
    </source>
</evidence>
<evidence type="ECO:0000303" key="7">
    <source>
    </source>
</evidence>
<evidence type="ECO:0000305" key="8"/>
<evidence type="ECO:0000305" key="9">
    <source>
    </source>
</evidence>
<feature type="chain" id="PRO_0000205230" description="Isopentenyl-diphosphate delta-isomerase">
    <location>
        <begin position="1"/>
        <end position="229"/>
    </location>
</feature>
<feature type="domain" description="Nudix hydrolase" evidence="4">
    <location>
        <begin position="52"/>
        <end position="202"/>
    </location>
</feature>
<feature type="active site" evidence="1">
    <location>
        <position position="89"/>
    </location>
</feature>
<feature type="active site" evidence="1">
    <location>
        <position position="154"/>
    </location>
</feature>
<feature type="binding site" evidence="2">
    <location>
        <position position="39"/>
    </location>
    <ligand>
        <name>substrate</name>
    </ligand>
</feature>
<feature type="binding site" evidence="3">
    <location>
        <position position="43"/>
    </location>
    <ligand>
        <name>Mg(2+)</name>
        <dbReference type="ChEBI" id="CHEBI:18420"/>
    </ligand>
</feature>
<feature type="binding site" evidence="3">
    <location>
        <position position="54"/>
    </location>
    <ligand>
        <name>Mg(2+)</name>
        <dbReference type="ChEBI" id="CHEBI:18420"/>
    </ligand>
</feature>
<feature type="binding site" evidence="2">
    <location>
        <position position="72"/>
    </location>
    <ligand>
        <name>substrate</name>
    </ligand>
</feature>
<feature type="binding site" evidence="2">
    <location>
        <position position="77"/>
    </location>
    <ligand>
        <name>substrate</name>
    </ligand>
</feature>
<feature type="binding site" evidence="2">
    <location>
        <position position="90"/>
    </location>
    <ligand>
        <name>substrate</name>
    </ligand>
</feature>
<feature type="binding site" evidence="3">
    <location>
        <position position="152"/>
    </location>
    <ligand>
        <name>Mg(2+)</name>
        <dbReference type="ChEBI" id="CHEBI:18420"/>
    </ligand>
</feature>
<feature type="binding site" evidence="3">
    <location>
        <position position="154"/>
    </location>
    <ligand>
        <name>Mg(2+)</name>
        <dbReference type="ChEBI" id="CHEBI:18420"/>
    </ligand>
</feature>
<protein>
    <recommendedName>
        <fullName evidence="7">Isopentenyl-diphosphate delta-isomerase</fullName>
        <ecNumber evidence="1">5.3.3.2</ecNumber>
    </recommendedName>
    <alternativeName>
        <fullName evidence="7">Isopentenyl pyrophosphate isomerasee</fullName>
        <shortName evidence="7">IPP isomerase</shortName>
    </alternativeName>
</protein>
<reference key="1">
    <citation type="journal article" date="2002" name="Nature">
        <title>The genome sequence of Schizosaccharomyces pombe.</title>
        <authorList>
            <person name="Wood V."/>
            <person name="Gwilliam R."/>
            <person name="Rajandream M.A."/>
            <person name="Lyne M.H."/>
            <person name="Lyne R."/>
            <person name="Stewart A."/>
            <person name="Sgouros J.G."/>
            <person name="Peat N."/>
            <person name="Hayles J."/>
            <person name="Baker S.G."/>
            <person name="Basham D."/>
            <person name="Bowman S."/>
            <person name="Brooks K."/>
            <person name="Brown D."/>
            <person name="Brown S."/>
            <person name="Chillingworth T."/>
            <person name="Churcher C.M."/>
            <person name="Collins M."/>
            <person name="Connor R."/>
            <person name="Cronin A."/>
            <person name="Davis P."/>
            <person name="Feltwell T."/>
            <person name="Fraser A."/>
            <person name="Gentles S."/>
            <person name="Goble A."/>
            <person name="Hamlin N."/>
            <person name="Harris D.E."/>
            <person name="Hidalgo J."/>
            <person name="Hodgson G."/>
            <person name="Holroyd S."/>
            <person name="Hornsby T."/>
            <person name="Howarth S."/>
            <person name="Huckle E.J."/>
            <person name="Hunt S."/>
            <person name="Jagels K."/>
            <person name="James K.D."/>
            <person name="Jones L."/>
            <person name="Jones M."/>
            <person name="Leather S."/>
            <person name="McDonald S."/>
            <person name="McLean J."/>
            <person name="Mooney P."/>
            <person name="Moule S."/>
            <person name="Mungall K.L."/>
            <person name="Murphy L.D."/>
            <person name="Niblett D."/>
            <person name="Odell C."/>
            <person name="Oliver K."/>
            <person name="O'Neil S."/>
            <person name="Pearson D."/>
            <person name="Quail M.A."/>
            <person name="Rabbinowitsch E."/>
            <person name="Rutherford K.M."/>
            <person name="Rutter S."/>
            <person name="Saunders D."/>
            <person name="Seeger K."/>
            <person name="Sharp S."/>
            <person name="Skelton J."/>
            <person name="Simmonds M.N."/>
            <person name="Squares R."/>
            <person name="Squares S."/>
            <person name="Stevens K."/>
            <person name="Taylor K."/>
            <person name="Taylor R.G."/>
            <person name="Tivey A."/>
            <person name="Walsh S.V."/>
            <person name="Warren T."/>
            <person name="Whitehead S."/>
            <person name="Woodward J.R."/>
            <person name="Volckaert G."/>
            <person name="Aert R."/>
            <person name="Robben J."/>
            <person name="Grymonprez B."/>
            <person name="Weltjens I."/>
            <person name="Vanstreels E."/>
            <person name="Rieger M."/>
            <person name="Schaefer M."/>
            <person name="Mueller-Auer S."/>
            <person name="Gabel C."/>
            <person name="Fuchs M."/>
            <person name="Duesterhoeft A."/>
            <person name="Fritzc C."/>
            <person name="Holzer E."/>
            <person name="Moestl D."/>
            <person name="Hilbert H."/>
            <person name="Borzym K."/>
            <person name="Langer I."/>
            <person name="Beck A."/>
            <person name="Lehrach H."/>
            <person name="Reinhardt R."/>
            <person name="Pohl T.M."/>
            <person name="Eger P."/>
            <person name="Zimmermann W."/>
            <person name="Wedler H."/>
            <person name="Wambutt R."/>
            <person name="Purnelle B."/>
            <person name="Goffeau A."/>
            <person name="Cadieu E."/>
            <person name="Dreano S."/>
            <person name="Gloux S."/>
            <person name="Lelaure V."/>
            <person name="Mottier S."/>
            <person name="Galibert F."/>
            <person name="Aves S.J."/>
            <person name="Xiang Z."/>
            <person name="Hunt C."/>
            <person name="Moore K."/>
            <person name="Hurst S.M."/>
            <person name="Lucas M."/>
            <person name="Rochet M."/>
            <person name="Gaillardin C."/>
            <person name="Tallada V.A."/>
            <person name="Garzon A."/>
            <person name="Thode G."/>
            <person name="Daga R.R."/>
            <person name="Cruzado L."/>
            <person name="Jimenez J."/>
            <person name="Sanchez M."/>
            <person name="del Rey F."/>
            <person name="Benito J."/>
            <person name="Dominguez A."/>
            <person name="Revuelta J.L."/>
            <person name="Moreno S."/>
            <person name="Armstrong J."/>
            <person name="Forsburg S.L."/>
            <person name="Cerutti L."/>
            <person name="Lowe T."/>
            <person name="McCombie W.R."/>
            <person name="Paulsen I."/>
            <person name="Potashkin J."/>
            <person name="Shpakovski G.V."/>
            <person name="Ussery D."/>
            <person name="Barrell B.G."/>
            <person name="Nurse P."/>
        </authorList>
    </citation>
    <scope>NUCLEOTIDE SEQUENCE [LARGE SCALE GENOMIC DNA]</scope>
    <source>
        <strain>972 / ATCC 24843</strain>
    </source>
</reference>
<reference key="2">
    <citation type="journal article" date="2011" name="Science">
        <title>Comparative functional genomics of the fission yeasts.</title>
        <authorList>
            <person name="Rhind N."/>
            <person name="Chen Z."/>
            <person name="Yassour M."/>
            <person name="Thompson D.A."/>
            <person name="Haas B.J."/>
            <person name="Habib N."/>
            <person name="Wapinski I."/>
            <person name="Roy S."/>
            <person name="Lin M.F."/>
            <person name="Heiman D.I."/>
            <person name="Young S.K."/>
            <person name="Furuya K."/>
            <person name="Guo Y."/>
            <person name="Pidoux A."/>
            <person name="Chen H.M."/>
            <person name="Robbertse B."/>
            <person name="Goldberg J.M."/>
            <person name="Aoki K."/>
            <person name="Bayne E.H."/>
            <person name="Berlin A.M."/>
            <person name="Desjardins C.A."/>
            <person name="Dobbs E."/>
            <person name="Dukaj L."/>
            <person name="Fan L."/>
            <person name="FitzGerald M.G."/>
            <person name="French C."/>
            <person name="Gujja S."/>
            <person name="Hansen K."/>
            <person name="Keifenheim D."/>
            <person name="Levin J.Z."/>
            <person name="Mosher R.A."/>
            <person name="Mueller C.A."/>
            <person name="Pfiffner J."/>
            <person name="Priest M."/>
            <person name="Russ C."/>
            <person name="Smialowska A."/>
            <person name="Swoboda P."/>
            <person name="Sykes S.M."/>
            <person name="Vaughn M."/>
            <person name="Vengrova S."/>
            <person name="Yoder R."/>
            <person name="Zeng Q."/>
            <person name="Allshire R."/>
            <person name="Baulcombe D."/>
            <person name="Birren B.W."/>
            <person name="Brown W."/>
            <person name="Ekwall K."/>
            <person name="Kellis M."/>
            <person name="Leatherwood J."/>
            <person name="Levin H."/>
            <person name="Margalit H."/>
            <person name="Martienssen R."/>
            <person name="Nieduszynski C.A."/>
            <person name="Spatafora J.W."/>
            <person name="Friedman N."/>
            <person name="Dalgaard J.Z."/>
            <person name="Baumann P."/>
            <person name="Niki H."/>
            <person name="Regev A."/>
            <person name="Nusbaum C."/>
        </authorList>
    </citation>
    <scope>REVISION OF GENE MODEL</scope>
</reference>
<reference key="3">
    <citation type="journal article" date="1995" name="J. Biol. Chem.">
        <title>Isolation of Schizosaccharomyces pombe isopentenyl diphosphate isomerase cDNA clones by complementation and synthesis of the enzyme in Escherichia coli.</title>
        <authorList>
            <person name="Hahn F.M."/>
            <person name="Poulter C.D."/>
        </authorList>
    </citation>
    <scope>NUCLEOTIDE SEQUENCE [MRNA] OF 2-229</scope>
    <scope>FUNCTION</scope>
    <scope>PATHWAY</scope>
</reference>
<reference key="4">
    <citation type="journal article" date="2006" name="Nat. Biotechnol.">
        <title>ORFeome cloning and global analysis of protein localization in the fission yeast Schizosaccharomyces pombe.</title>
        <authorList>
            <person name="Matsuyama A."/>
            <person name="Arai R."/>
            <person name="Yashiroda Y."/>
            <person name="Shirai A."/>
            <person name="Kamata A."/>
            <person name="Sekido S."/>
            <person name="Kobayashi Y."/>
            <person name="Hashimoto A."/>
            <person name="Hamamoto M."/>
            <person name="Hiraoka Y."/>
            <person name="Horinouchi S."/>
            <person name="Yoshida M."/>
        </authorList>
    </citation>
    <scope>SUBCELLULAR LOCATION [LARGE SCALE ANALYSIS]</scope>
</reference>
<accession>Q10132</accession>
<name>IDI1_SCHPO</name>
<sequence>MIMSSQQEKKDYDEEQLRLMEEVCIVVDENDVPLRYGTKKECHLMENINKGLLHRAFSMFIFDEQNRLLLQQRAEEKITFPSLWTNTCCSHPLDVAGERGNTLPEAVEGVKNAAQRKLFHELGIQAKYIPKDKFQFLTRIHYLAPSTGAWGEHEIDYILFFKGKVELDINPNEVQAYKYVTMEELKEMFSDPQYGFTPWFKLICEHFMFKWWQDVDHASKFQDTLIHRC</sequence>
<dbReference type="EC" id="5.3.3.2" evidence="1"/>
<dbReference type="EMBL" id="CU329671">
    <property type="protein sequence ID" value="CAB53731.2"/>
    <property type="molecule type" value="Genomic_DNA"/>
</dbReference>
<dbReference type="EMBL" id="U21154">
    <property type="protein sequence ID" value="AAA80596.1"/>
    <property type="molecule type" value="mRNA"/>
</dbReference>
<dbReference type="PIR" id="A56442">
    <property type="entry name" value="A56442"/>
</dbReference>
<dbReference type="RefSeq" id="NP_595164.2">
    <property type="nucleotide sequence ID" value="NM_001021073.2"/>
</dbReference>
<dbReference type="SMR" id="Q10132"/>
<dbReference type="FunCoup" id="Q10132">
    <property type="interactions" value="566"/>
</dbReference>
<dbReference type="STRING" id="284812.Q10132"/>
<dbReference type="iPTMnet" id="Q10132"/>
<dbReference type="PaxDb" id="4896-SPBC106.15.1"/>
<dbReference type="EnsemblFungi" id="SPBC106.15.1">
    <property type="protein sequence ID" value="SPBC106.15.1:pep"/>
    <property type="gene ID" value="SPBC106.15"/>
</dbReference>
<dbReference type="GeneID" id="2540174"/>
<dbReference type="KEGG" id="spo:2540174"/>
<dbReference type="PomBase" id="SPBC106.15">
    <property type="gene designation" value="idi1"/>
</dbReference>
<dbReference type="VEuPathDB" id="FungiDB:SPBC106.15"/>
<dbReference type="eggNOG" id="KOG0142">
    <property type="taxonomic scope" value="Eukaryota"/>
</dbReference>
<dbReference type="HOGENOM" id="CLU_060552_0_2_1"/>
<dbReference type="InParanoid" id="Q10132"/>
<dbReference type="OMA" id="KAPFDNG"/>
<dbReference type="Reactome" id="R-SPO-191273">
    <property type="pathway name" value="Cholesterol biosynthesis"/>
</dbReference>
<dbReference type="UniPathway" id="UPA00059">
    <property type="reaction ID" value="UER00104"/>
</dbReference>
<dbReference type="PRO" id="PR:Q10132"/>
<dbReference type="Proteomes" id="UP000002485">
    <property type="component" value="Chromosome II"/>
</dbReference>
<dbReference type="GO" id="GO:0005737">
    <property type="term" value="C:cytoplasm"/>
    <property type="evidence" value="ECO:0000318"/>
    <property type="project" value="GO_Central"/>
</dbReference>
<dbReference type="GO" id="GO:0005829">
    <property type="term" value="C:cytosol"/>
    <property type="evidence" value="ECO:0007005"/>
    <property type="project" value="PomBase"/>
</dbReference>
<dbReference type="GO" id="GO:0005634">
    <property type="term" value="C:nucleus"/>
    <property type="evidence" value="ECO:0007005"/>
    <property type="project" value="PomBase"/>
</dbReference>
<dbReference type="GO" id="GO:0004452">
    <property type="term" value="F:isopentenyl-diphosphate delta-isomerase activity"/>
    <property type="evidence" value="ECO:0000314"/>
    <property type="project" value="PomBase"/>
</dbReference>
<dbReference type="GO" id="GO:0046872">
    <property type="term" value="F:metal ion binding"/>
    <property type="evidence" value="ECO:0007669"/>
    <property type="project" value="UniProtKB-KW"/>
</dbReference>
<dbReference type="GO" id="GO:0050992">
    <property type="term" value="P:dimethylallyl diphosphate biosynthetic process"/>
    <property type="evidence" value="ECO:0007669"/>
    <property type="project" value="UniProtKB-UniPathway"/>
</dbReference>
<dbReference type="GO" id="GO:0010142">
    <property type="term" value="P:farnesyl diphosphate biosynthetic process, mevalonate pathway"/>
    <property type="evidence" value="ECO:0000266"/>
    <property type="project" value="PomBase"/>
</dbReference>
<dbReference type="GO" id="GO:0009240">
    <property type="term" value="P:isopentenyl diphosphate biosynthetic process"/>
    <property type="evidence" value="ECO:0000318"/>
    <property type="project" value="GO_Central"/>
</dbReference>
<dbReference type="GO" id="GO:0016126">
    <property type="term" value="P:sterol biosynthetic process"/>
    <property type="evidence" value="ECO:0007669"/>
    <property type="project" value="UniProtKB-KW"/>
</dbReference>
<dbReference type="CDD" id="cd02885">
    <property type="entry name" value="NUDIX_IPP_Isomerase"/>
    <property type="match status" value="1"/>
</dbReference>
<dbReference type="FunFam" id="3.90.79.10:FF:000012">
    <property type="entry name" value="Isopentenyl-diphosphate Delta-isomerase 1"/>
    <property type="match status" value="1"/>
</dbReference>
<dbReference type="Gene3D" id="3.90.79.10">
    <property type="entry name" value="Nucleoside Triphosphate Pyrophosphohydrolase"/>
    <property type="match status" value="1"/>
</dbReference>
<dbReference type="InterPro" id="IPR011876">
    <property type="entry name" value="IsopentenylPP_isomerase_typ1"/>
</dbReference>
<dbReference type="InterPro" id="IPR015797">
    <property type="entry name" value="NUDIX_hydrolase-like_dom_sf"/>
</dbReference>
<dbReference type="InterPro" id="IPR000086">
    <property type="entry name" value="NUDIX_hydrolase_dom"/>
</dbReference>
<dbReference type="NCBIfam" id="TIGR02150">
    <property type="entry name" value="IPP_isom_1"/>
    <property type="match status" value="1"/>
</dbReference>
<dbReference type="PANTHER" id="PTHR10885">
    <property type="entry name" value="ISOPENTENYL-DIPHOSPHATE DELTA-ISOMERASE"/>
    <property type="match status" value="1"/>
</dbReference>
<dbReference type="PANTHER" id="PTHR10885:SF0">
    <property type="entry name" value="ISOPENTENYL-DIPHOSPHATE DELTA-ISOMERASE"/>
    <property type="match status" value="1"/>
</dbReference>
<dbReference type="Pfam" id="PF00293">
    <property type="entry name" value="NUDIX"/>
    <property type="match status" value="1"/>
</dbReference>
<dbReference type="PIRSF" id="PIRSF018427">
    <property type="entry name" value="Isopntndiph_ism"/>
    <property type="match status" value="1"/>
</dbReference>
<dbReference type="SUPFAM" id="SSF55811">
    <property type="entry name" value="Nudix"/>
    <property type="match status" value="1"/>
</dbReference>
<dbReference type="PROSITE" id="PS51462">
    <property type="entry name" value="NUDIX"/>
    <property type="match status" value="1"/>
</dbReference>
<organism>
    <name type="scientific">Schizosaccharomyces pombe (strain 972 / ATCC 24843)</name>
    <name type="common">Fission yeast</name>
    <dbReference type="NCBI Taxonomy" id="284812"/>
    <lineage>
        <taxon>Eukaryota</taxon>
        <taxon>Fungi</taxon>
        <taxon>Dikarya</taxon>
        <taxon>Ascomycota</taxon>
        <taxon>Taphrinomycotina</taxon>
        <taxon>Schizosaccharomycetes</taxon>
        <taxon>Schizosaccharomycetales</taxon>
        <taxon>Schizosaccharomycetaceae</taxon>
        <taxon>Schizosaccharomyces</taxon>
    </lineage>
</organism>
<gene>
    <name evidence="7" type="primary">idi1</name>
    <name type="ORF">SPBC106.15</name>
</gene>